<reference key="1">
    <citation type="journal article" date="2001" name="Genomics">
        <title>Identification of mesoderm development (mesd) candidate genes by comparative mapping and genome sequence analysis.</title>
        <authorList>
            <person name="Wines M.E."/>
            <person name="Lee L."/>
            <person name="Katari M.S."/>
            <person name="Zhang L."/>
            <person name="DeRossi C."/>
            <person name="Shi Y."/>
            <person name="Perkins S."/>
            <person name="Feldman M."/>
            <person name="McCombie W.R."/>
            <person name="Holdener B.C."/>
        </authorList>
    </citation>
    <scope>NUCLEOTIDE SEQUENCE [MRNA]</scope>
    <source>
        <tissue>Retina</tissue>
    </source>
</reference>
<reference key="2">
    <citation type="journal article" date="2004" name="Genome Res.">
        <title>The status, quality, and expansion of the NIH full-length cDNA project: the Mammalian Gene Collection (MGC).</title>
        <authorList>
            <consortium name="The MGC Project Team"/>
        </authorList>
    </citation>
    <scope>NUCLEOTIDE SEQUENCE [LARGE SCALE MRNA]</scope>
    <source>
        <tissue>Skin</tissue>
    </source>
</reference>
<reference key="3">
    <citation type="journal article" date="2009" name="Anal. Chem.">
        <title>Lys-N and trypsin cover complementary parts of the phosphoproteome in a refined SCX-based approach.</title>
        <authorList>
            <person name="Gauci S."/>
            <person name="Helbig A.O."/>
            <person name="Slijper M."/>
            <person name="Krijgsveld J."/>
            <person name="Heck A.J."/>
            <person name="Mohammed S."/>
        </authorList>
    </citation>
    <scope>ACETYLATION [LARGE SCALE ANALYSIS] AT ALA-2</scope>
    <scope>CLEAVAGE OF INITIATOR METHIONINE [LARGE SCALE ANALYSIS]</scope>
    <scope>IDENTIFICATION BY MASS SPECTROMETRY [LARGE SCALE ANALYSIS]</scope>
</reference>
<reference key="4">
    <citation type="journal article" date="2012" name="Int. J. Oncol.">
        <title>Novel oncogenic function of mesoderm development candidate 1 and its regulation by MiR-574-3p in bladder cancer cell lines.</title>
        <authorList>
            <person name="Tatarano S."/>
            <person name="Chiyomaru T."/>
            <person name="Kawakami K."/>
            <person name="Enokida H."/>
            <person name="Yoshino H."/>
            <person name="Hidaka H."/>
            <person name="Nohata N."/>
            <person name="Yamasaki T."/>
            <person name="Gotanda T."/>
            <person name="Tachiwada T."/>
            <person name="Seki N."/>
            <person name="Nakagawa M."/>
        </authorList>
    </citation>
    <scope>FUNCTION</scope>
    <scope>INDUCTION BY MIR574-3P</scope>
</reference>
<protein>
    <recommendedName>
        <fullName evidence="4">Talin rod domain-containing protein 1</fullName>
    </recommendedName>
    <alternativeName>
        <fullName evidence="5">Mesoderm development candidate 1</fullName>
    </alternativeName>
</protein>
<accession>Q9H1K6</accession>
<name>TLRN1_HUMAN</name>
<dbReference type="EMBL" id="AY007810">
    <property type="protein sequence ID" value="AAG41058.1"/>
    <property type="molecule type" value="mRNA"/>
</dbReference>
<dbReference type="EMBL" id="BC084554">
    <property type="protein sequence ID" value="AAH84554.1"/>
    <property type="molecule type" value="mRNA"/>
</dbReference>
<dbReference type="CCDS" id="CCDS10316.1"/>
<dbReference type="RefSeq" id="NP_072088.1">
    <property type="nucleotide sequence ID" value="NM_022566.3"/>
</dbReference>
<dbReference type="PDB" id="6XZ3">
    <property type="method" value="X-ray"/>
    <property type="resolution" value="2.19 A"/>
    <property type="chains" value="A=143-273"/>
</dbReference>
<dbReference type="PDB" id="6XZ4">
    <property type="method" value="X-ray"/>
    <property type="resolution" value="2.30 A"/>
    <property type="chains" value="A/B=1-362"/>
</dbReference>
<dbReference type="PDBsum" id="6XZ3"/>
<dbReference type="PDBsum" id="6XZ4"/>
<dbReference type="SMR" id="Q9H1K6"/>
<dbReference type="BioGRID" id="121865">
    <property type="interactions" value="18"/>
</dbReference>
<dbReference type="FunCoup" id="Q9H1K6">
    <property type="interactions" value="18"/>
</dbReference>
<dbReference type="IntAct" id="Q9H1K6">
    <property type="interactions" value="7"/>
</dbReference>
<dbReference type="STRING" id="9606.ENSP00000267984"/>
<dbReference type="GlyGen" id="Q9H1K6">
    <property type="glycosylation" value="1 site"/>
</dbReference>
<dbReference type="iPTMnet" id="Q9H1K6"/>
<dbReference type="PhosphoSitePlus" id="Q9H1K6"/>
<dbReference type="BioMuta" id="TLNRD1"/>
<dbReference type="DMDM" id="24418561"/>
<dbReference type="jPOST" id="Q9H1K6"/>
<dbReference type="MassIVE" id="Q9H1K6"/>
<dbReference type="PaxDb" id="9606-ENSP00000267984"/>
<dbReference type="PeptideAtlas" id="Q9H1K6"/>
<dbReference type="ProteomicsDB" id="80425"/>
<dbReference type="Antibodypedia" id="63061">
    <property type="antibodies" value="20 antibodies from 9 providers"/>
</dbReference>
<dbReference type="DNASU" id="59274"/>
<dbReference type="Ensembl" id="ENST00000267984.4">
    <property type="protein sequence ID" value="ENSP00000267984.2"/>
    <property type="gene ID" value="ENSG00000140406.4"/>
</dbReference>
<dbReference type="GeneID" id="59274"/>
<dbReference type="KEGG" id="hsa:59274"/>
<dbReference type="MANE-Select" id="ENST00000267984.4">
    <property type="protein sequence ID" value="ENSP00000267984.2"/>
    <property type="RefSeq nucleotide sequence ID" value="NM_022566.3"/>
    <property type="RefSeq protein sequence ID" value="NP_072088.1"/>
</dbReference>
<dbReference type="UCSC" id="uc002bfz.4">
    <property type="organism name" value="human"/>
</dbReference>
<dbReference type="AGR" id="HGNC:13519"/>
<dbReference type="CTD" id="59274"/>
<dbReference type="DisGeNET" id="59274"/>
<dbReference type="GeneCards" id="TLNRD1"/>
<dbReference type="HGNC" id="HGNC:13519">
    <property type="gene designation" value="TLNRD1"/>
</dbReference>
<dbReference type="HPA" id="ENSG00000140406">
    <property type="expression patterns" value="Low tissue specificity"/>
</dbReference>
<dbReference type="MIM" id="615466">
    <property type="type" value="gene"/>
</dbReference>
<dbReference type="neXtProt" id="NX_Q9H1K6"/>
<dbReference type="OpenTargets" id="ENSG00000140406"/>
<dbReference type="PharmGKB" id="PA30760"/>
<dbReference type="VEuPathDB" id="HostDB:ENSG00000140406"/>
<dbReference type="eggNOG" id="KOG4261">
    <property type="taxonomic scope" value="Eukaryota"/>
</dbReference>
<dbReference type="GeneTree" id="ENSGT00910000144335"/>
<dbReference type="HOGENOM" id="CLU_764970_0_0_1"/>
<dbReference type="InParanoid" id="Q9H1K6"/>
<dbReference type="OMA" id="DHCKVKM"/>
<dbReference type="OrthoDB" id="10009851at2759"/>
<dbReference type="PAN-GO" id="Q9H1K6">
    <property type="GO annotations" value="1 GO annotation based on evolutionary models"/>
</dbReference>
<dbReference type="PhylomeDB" id="Q9H1K6"/>
<dbReference type="PathwayCommons" id="Q9H1K6"/>
<dbReference type="SignaLink" id="Q9H1K6"/>
<dbReference type="BioGRID-ORCS" id="59274">
    <property type="hits" value="21 hits in 1166 CRISPR screens"/>
</dbReference>
<dbReference type="ChiTaRS" id="MESDC1">
    <property type="organism name" value="human"/>
</dbReference>
<dbReference type="GenomeRNAi" id="59274"/>
<dbReference type="Pharos" id="Q9H1K6">
    <property type="development level" value="Tdark"/>
</dbReference>
<dbReference type="PRO" id="PR:Q9H1K6"/>
<dbReference type="Proteomes" id="UP000005640">
    <property type="component" value="Chromosome 15"/>
</dbReference>
<dbReference type="RNAct" id="Q9H1K6">
    <property type="molecule type" value="protein"/>
</dbReference>
<dbReference type="Bgee" id="ENSG00000140406">
    <property type="expression patterns" value="Expressed in ileal mucosa and 185 other cell types or tissues"/>
</dbReference>
<dbReference type="GO" id="GO:0001725">
    <property type="term" value="C:stress fiber"/>
    <property type="evidence" value="ECO:0007669"/>
    <property type="project" value="Ensembl"/>
</dbReference>
<dbReference type="GO" id="GO:0003779">
    <property type="term" value="F:actin binding"/>
    <property type="evidence" value="ECO:0000250"/>
    <property type="project" value="HGNC"/>
</dbReference>
<dbReference type="GO" id="GO:0042802">
    <property type="term" value="F:identical protein binding"/>
    <property type="evidence" value="ECO:0000353"/>
    <property type="project" value="IntAct"/>
</dbReference>
<dbReference type="FunFam" id="1.20.120.230:FF:000018">
    <property type="entry name" value="Mesoderm development candidate 1"/>
    <property type="match status" value="1"/>
</dbReference>
<dbReference type="Gene3D" id="1.20.120.230">
    <property type="entry name" value="Alpha-catenin/vinculin-like"/>
    <property type="match status" value="1"/>
</dbReference>
<dbReference type="Gene3D" id="1.20.1420.10">
    <property type="entry name" value="Talin, central domain"/>
    <property type="match status" value="1"/>
</dbReference>
<dbReference type="InterPro" id="IPR054082">
    <property type="entry name" value="Talin_IBS2B"/>
</dbReference>
<dbReference type="InterPro" id="IPR042799">
    <property type="entry name" value="TLNRD1"/>
</dbReference>
<dbReference type="PANTHER" id="PTHR47133">
    <property type="entry name" value="TALIN ROD DOMAIN-CONTAINING PROTEIN 1"/>
    <property type="match status" value="1"/>
</dbReference>
<dbReference type="PANTHER" id="PTHR47133:SF1">
    <property type="entry name" value="TALIN ROD DOMAIN-CONTAINING PROTEIN 1"/>
    <property type="match status" value="1"/>
</dbReference>
<dbReference type="Pfam" id="PF21896">
    <property type="entry name" value="Talin_IBS2B"/>
    <property type="match status" value="1"/>
</dbReference>
<proteinExistence type="evidence at protein level"/>
<comment type="function">
    <text evidence="3">Actin-binding protein which may have an oncogenic function and regulates cell proliferation, migration and invasion in cancer cells.</text>
</comment>
<comment type="subunit">
    <text evidence="1">May homodimerize. Interacts with F-actin.</text>
</comment>
<comment type="interaction">
    <interactant intactId="EBI-12344941">
        <id>Q9H1K6</id>
    </interactant>
    <interactant intactId="EBI-1573056">
        <id>Q9BSQ5</id>
        <label>CCM2</label>
    </interactant>
    <organismsDiffer>false</organismsDiffer>
    <experiments>4</experiments>
</comment>
<comment type="interaction">
    <interactant intactId="EBI-12344941">
        <id>Q9H1K6</id>
    </interactant>
    <interactant intactId="EBI-79165">
        <id>Q9NRD5</id>
        <label>PICK1</label>
    </interactant>
    <organismsDiffer>false</organismsDiffer>
    <experiments>3</experiments>
</comment>
<comment type="interaction">
    <interactant intactId="EBI-12344941">
        <id>Q9H1K6</id>
    </interactant>
    <interactant intactId="EBI-19952306">
        <id>O14492-2</id>
        <label>SH2B2</label>
    </interactant>
    <organismsDiffer>false</organismsDiffer>
    <experiments>3</experiments>
</comment>
<comment type="interaction">
    <interactant intactId="EBI-12344941">
        <id>Q9H1K6</id>
    </interactant>
    <interactant intactId="EBI-12344941">
        <id>Q9H1K6</id>
        <label>TLNRD1</label>
    </interactant>
    <organismsDiffer>false</organismsDiffer>
    <experiments>3</experiments>
</comment>
<comment type="induction">
    <text evidence="3">Down-regulated by microRNA MIR574-3p.</text>
</comment>
<keyword id="KW-0002">3D-structure</keyword>
<keyword id="KW-0007">Acetylation</keyword>
<keyword id="KW-1267">Proteomics identification</keyword>
<keyword id="KW-1185">Reference proteome</keyword>
<organism>
    <name type="scientific">Homo sapiens</name>
    <name type="common">Human</name>
    <dbReference type="NCBI Taxonomy" id="9606"/>
    <lineage>
        <taxon>Eukaryota</taxon>
        <taxon>Metazoa</taxon>
        <taxon>Chordata</taxon>
        <taxon>Craniata</taxon>
        <taxon>Vertebrata</taxon>
        <taxon>Euteleostomi</taxon>
        <taxon>Mammalia</taxon>
        <taxon>Eutheria</taxon>
        <taxon>Euarchontoglires</taxon>
        <taxon>Primates</taxon>
        <taxon>Haplorrhini</taxon>
        <taxon>Catarrhini</taxon>
        <taxon>Hominidae</taxon>
        <taxon>Homo</taxon>
    </lineage>
</organism>
<feature type="initiator methionine" description="Removed" evidence="6">
    <location>
        <position position="1"/>
    </location>
</feature>
<feature type="chain" id="PRO_0000096441" description="Talin rod domain-containing protein 1">
    <location>
        <begin position="2"/>
        <end position="362"/>
    </location>
</feature>
<feature type="region of interest" description="Disordered" evidence="2">
    <location>
        <begin position="1"/>
        <end position="26"/>
    </location>
</feature>
<feature type="compositionally biased region" description="Low complexity" evidence="2">
    <location>
        <begin position="13"/>
        <end position="26"/>
    </location>
</feature>
<feature type="modified residue" description="N-acetylalanine" evidence="6">
    <location>
        <position position="2"/>
    </location>
</feature>
<feature type="helix" evidence="8">
    <location>
        <begin position="42"/>
        <end position="57"/>
    </location>
</feature>
<feature type="strand" evidence="8">
    <location>
        <begin position="61"/>
        <end position="64"/>
    </location>
</feature>
<feature type="strand" evidence="8">
    <location>
        <begin position="70"/>
        <end position="72"/>
    </location>
</feature>
<feature type="helix" evidence="8">
    <location>
        <begin position="75"/>
        <end position="102"/>
    </location>
</feature>
<feature type="helix" evidence="8">
    <location>
        <begin position="105"/>
        <end position="135"/>
    </location>
</feature>
<feature type="helix" evidence="7">
    <location>
        <begin position="150"/>
        <end position="169"/>
    </location>
</feature>
<feature type="helix" evidence="7">
    <location>
        <begin position="172"/>
        <end position="174"/>
    </location>
</feature>
<feature type="helix" evidence="7">
    <location>
        <begin position="177"/>
        <end position="204"/>
    </location>
</feature>
<feature type="helix" evidence="7">
    <location>
        <begin position="208"/>
        <end position="237"/>
    </location>
</feature>
<feature type="helix" evidence="7">
    <location>
        <begin position="241"/>
        <end position="249"/>
    </location>
</feature>
<feature type="helix" evidence="7">
    <location>
        <begin position="251"/>
        <end position="265"/>
    </location>
</feature>
<feature type="helix" evidence="8">
    <location>
        <begin position="268"/>
        <end position="270"/>
    </location>
</feature>
<feature type="helix" evidence="8">
    <location>
        <begin position="279"/>
        <end position="308"/>
    </location>
</feature>
<feature type="strand" evidence="8">
    <location>
        <begin position="310"/>
        <end position="312"/>
    </location>
</feature>
<feature type="turn" evidence="8">
    <location>
        <begin position="313"/>
        <end position="315"/>
    </location>
</feature>
<feature type="helix" evidence="8">
    <location>
        <begin position="319"/>
        <end position="341"/>
    </location>
</feature>
<evidence type="ECO:0000250" key="1">
    <source>
        <dbReference type="UniProtKB" id="Q9ERE8"/>
    </source>
</evidence>
<evidence type="ECO:0000256" key="2">
    <source>
        <dbReference type="SAM" id="MobiDB-lite"/>
    </source>
</evidence>
<evidence type="ECO:0000269" key="3">
    <source>
    </source>
</evidence>
<evidence type="ECO:0000305" key="4"/>
<evidence type="ECO:0000312" key="5">
    <source>
        <dbReference type="HGNC" id="HGNC:13519"/>
    </source>
</evidence>
<evidence type="ECO:0007744" key="6">
    <source>
    </source>
</evidence>
<evidence type="ECO:0007829" key="7">
    <source>
        <dbReference type="PDB" id="6XZ3"/>
    </source>
</evidence>
<evidence type="ECO:0007829" key="8">
    <source>
        <dbReference type="PDB" id="6XZ4"/>
    </source>
</evidence>
<sequence length="362" mass="37758">MASGSAGKPTGEAASPAPASAIGGASSQPRKRLVSVCDHCKGKMQLVADLLLLSSEARPVLFEGPASSGAGAESFEQCRDTIIARTKGLSILTHDVQSQLNMGRFGEAGDSLVELGDLVVSLTECSAHAAYLAAVATPGAQPAQPGLVDRYRVTRCRHEVEQGCAVLRATPLADMTPQLLLEVSQGLSRNLKFLTDACALASDKSRDRFSREQFKLGVKCMSTSASALLACVREVKVAPSELARSRCALFSGPLVQAVSALVGFATEPQFLGRAAAVSAEGKAVQTAILGGAMSVVSACVLLTQCLRDLAQHPDGGAKMSDHRERLRNSACAVSEGCTLLSQALRERSSPRTLPPVNSNSVN</sequence>
<gene>
    <name evidence="5" type="primary">TLNRD1</name>
    <name evidence="5" type="synonym">MESDC1</name>
</gene>